<evidence type="ECO:0000255" key="1">
    <source>
        <dbReference type="HAMAP-Rule" id="MF_00156"/>
    </source>
</evidence>
<accession>Q97F39</accession>
<gene>
    <name evidence="1" type="primary">panB</name>
    <name type="ordered locus">CA_C2914</name>
</gene>
<protein>
    <recommendedName>
        <fullName evidence="1">3-methyl-2-oxobutanoate hydroxymethyltransferase</fullName>
        <ecNumber evidence="1">2.1.2.11</ecNumber>
    </recommendedName>
    <alternativeName>
        <fullName evidence="1">Ketopantoate hydroxymethyltransferase</fullName>
        <shortName evidence="1">KPHMT</shortName>
    </alternativeName>
</protein>
<reference key="1">
    <citation type="journal article" date="2001" name="J. Bacteriol.">
        <title>Genome sequence and comparative analysis of the solvent-producing bacterium Clostridium acetobutylicum.</title>
        <authorList>
            <person name="Noelling J."/>
            <person name="Breton G."/>
            <person name="Omelchenko M.V."/>
            <person name="Makarova K.S."/>
            <person name="Zeng Q."/>
            <person name="Gibson R."/>
            <person name="Lee H.M."/>
            <person name="Dubois J."/>
            <person name="Qiu D."/>
            <person name="Hitti J."/>
            <person name="Wolf Y.I."/>
            <person name="Tatusov R.L."/>
            <person name="Sabathe F."/>
            <person name="Doucette-Stamm L.A."/>
            <person name="Soucaille P."/>
            <person name="Daly M.J."/>
            <person name="Bennett G.N."/>
            <person name="Koonin E.V."/>
            <person name="Smith D.R."/>
        </authorList>
    </citation>
    <scope>NUCLEOTIDE SEQUENCE [LARGE SCALE GENOMIC DNA]</scope>
    <source>
        <strain>ATCC 824 / DSM 792 / JCM 1419 / IAM 19013 / LMG 5710 / NBRC 13948 / NRRL B-527 / VKM B-1787 / 2291 / W</strain>
    </source>
</reference>
<comment type="function">
    <text evidence="1">Catalyzes the reversible reaction in which hydroxymethyl group from 5,10-methylenetetrahydrofolate is transferred onto alpha-ketoisovalerate to form ketopantoate.</text>
</comment>
<comment type="catalytic activity">
    <reaction evidence="1">
        <text>3-methyl-2-oxobutanoate + (6R)-5,10-methylene-5,6,7,8-tetrahydrofolate + H2O = 2-dehydropantoate + (6S)-5,6,7,8-tetrahydrofolate</text>
        <dbReference type="Rhea" id="RHEA:11824"/>
        <dbReference type="ChEBI" id="CHEBI:11561"/>
        <dbReference type="ChEBI" id="CHEBI:11851"/>
        <dbReference type="ChEBI" id="CHEBI:15377"/>
        <dbReference type="ChEBI" id="CHEBI:15636"/>
        <dbReference type="ChEBI" id="CHEBI:57453"/>
        <dbReference type="EC" id="2.1.2.11"/>
    </reaction>
</comment>
<comment type="cofactor">
    <cofactor evidence="1">
        <name>Mg(2+)</name>
        <dbReference type="ChEBI" id="CHEBI:18420"/>
    </cofactor>
    <text evidence="1">Binds 1 Mg(2+) ion per subunit.</text>
</comment>
<comment type="pathway">
    <text evidence="1">Cofactor biosynthesis; (R)-pantothenate biosynthesis; (R)-pantoate from 3-methyl-2-oxobutanoate: step 1/2.</text>
</comment>
<comment type="subunit">
    <text evidence="1">Homodecamer; pentamer of dimers.</text>
</comment>
<comment type="subcellular location">
    <subcellularLocation>
        <location evidence="1">Cytoplasm</location>
    </subcellularLocation>
</comment>
<comment type="similarity">
    <text evidence="1">Belongs to the PanB family.</text>
</comment>
<name>PANB_CLOAB</name>
<sequence>MKNTTETFKNSKFKKEKLVMLTAYDYSTAKIIDSCDINGILVGDSLGMVCLGYENTLSVTMEDMIHHTKAVVRGAKSTLIVADLPFMSYQTSVYDAVFNAGRLVKEAGATAIKLEGGALVCDRIKAIVDAQIPVMGHIGLTPQSVNAFGGFKIQGKNISKAKELIEDAKKIEAAGAFAITLEGIPEKLAKIITESITIPTIGIGAGKHCDGQILVYQDMLGMFSDLAPKFVKRYGNIGDDMKEAFNSYAKEVREGTFPDEAHSFKIDQSIIDEITK</sequence>
<proteinExistence type="inferred from homology"/>
<keyword id="KW-0963">Cytoplasm</keyword>
<keyword id="KW-0460">Magnesium</keyword>
<keyword id="KW-0479">Metal-binding</keyword>
<keyword id="KW-0566">Pantothenate biosynthesis</keyword>
<keyword id="KW-1185">Reference proteome</keyword>
<keyword id="KW-0808">Transferase</keyword>
<dbReference type="EC" id="2.1.2.11" evidence="1"/>
<dbReference type="EMBL" id="AE001437">
    <property type="protein sequence ID" value="AAK80856.1"/>
    <property type="molecule type" value="Genomic_DNA"/>
</dbReference>
<dbReference type="PIR" id="E97258">
    <property type="entry name" value="E97258"/>
</dbReference>
<dbReference type="RefSeq" id="NP_349516.1">
    <property type="nucleotide sequence ID" value="NC_003030.1"/>
</dbReference>
<dbReference type="RefSeq" id="WP_010966197.1">
    <property type="nucleotide sequence ID" value="NC_003030.1"/>
</dbReference>
<dbReference type="SMR" id="Q97F39"/>
<dbReference type="STRING" id="272562.CA_C2914"/>
<dbReference type="GeneID" id="44999402"/>
<dbReference type="KEGG" id="cac:CA_C2914"/>
<dbReference type="PATRIC" id="fig|272562.8.peg.3098"/>
<dbReference type="eggNOG" id="COG0413">
    <property type="taxonomic scope" value="Bacteria"/>
</dbReference>
<dbReference type="HOGENOM" id="CLU_036645_1_0_9"/>
<dbReference type="OrthoDB" id="9781789at2"/>
<dbReference type="UniPathway" id="UPA00028">
    <property type="reaction ID" value="UER00003"/>
</dbReference>
<dbReference type="Proteomes" id="UP000000814">
    <property type="component" value="Chromosome"/>
</dbReference>
<dbReference type="GO" id="GO:0005737">
    <property type="term" value="C:cytoplasm"/>
    <property type="evidence" value="ECO:0007669"/>
    <property type="project" value="UniProtKB-SubCell"/>
</dbReference>
<dbReference type="GO" id="GO:0003864">
    <property type="term" value="F:3-methyl-2-oxobutanoate hydroxymethyltransferase activity"/>
    <property type="evidence" value="ECO:0007669"/>
    <property type="project" value="UniProtKB-UniRule"/>
</dbReference>
<dbReference type="GO" id="GO:0000287">
    <property type="term" value="F:magnesium ion binding"/>
    <property type="evidence" value="ECO:0007669"/>
    <property type="project" value="TreeGrafter"/>
</dbReference>
<dbReference type="GO" id="GO:0015940">
    <property type="term" value="P:pantothenate biosynthetic process"/>
    <property type="evidence" value="ECO:0007669"/>
    <property type="project" value="UniProtKB-UniRule"/>
</dbReference>
<dbReference type="CDD" id="cd06557">
    <property type="entry name" value="KPHMT-like"/>
    <property type="match status" value="1"/>
</dbReference>
<dbReference type="FunFam" id="3.20.20.60:FF:000003">
    <property type="entry name" value="3-methyl-2-oxobutanoate hydroxymethyltransferase"/>
    <property type="match status" value="1"/>
</dbReference>
<dbReference type="Gene3D" id="3.20.20.60">
    <property type="entry name" value="Phosphoenolpyruvate-binding domains"/>
    <property type="match status" value="1"/>
</dbReference>
<dbReference type="HAMAP" id="MF_00156">
    <property type="entry name" value="PanB"/>
    <property type="match status" value="1"/>
</dbReference>
<dbReference type="InterPro" id="IPR003700">
    <property type="entry name" value="Pantoate_hydroxy_MeTrfase"/>
</dbReference>
<dbReference type="InterPro" id="IPR015813">
    <property type="entry name" value="Pyrv/PenolPyrv_kinase-like_dom"/>
</dbReference>
<dbReference type="InterPro" id="IPR040442">
    <property type="entry name" value="Pyrv_kinase-like_dom_sf"/>
</dbReference>
<dbReference type="NCBIfam" id="TIGR00222">
    <property type="entry name" value="panB"/>
    <property type="match status" value="1"/>
</dbReference>
<dbReference type="NCBIfam" id="NF001452">
    <property type="entry name" value="PRK00311.1"/>
    <property type="match status" value="1"/>
</dbReference>
<dbReference type="PANTHER" id="PTHR20881">
    <property type="entry name" value="3-METHYL-2-OXOBUTANOATE HYDROXYMETHYLTRANSFERASE"/>
    <property type="match status" value="1"/>
</dbReference>
<dbReference type="PANTHER" id="PTHR20881:SF0">
    <property type="entry name" value="3-METHYL-2-OXOBUTANOATE HYDROXYMETHYLTRANSFERASE"/>
    <property type="match status" value="1"/>
</dbReference>
<dbReference type="Pfam" id="PF02548">
    <property type="entry name" value="Pantoate_transf"/>
    <property type="match status" value="1"/>
</dbReference>
<dbReference type="PIRSF" id="PIRSF000388">
    <property type="entry name" value="Pantoate_hydroxy_MeTrfase"/>
    <property type="match status" value="1"/>
</dbReference>
<dbReference type="SUPFAM" id="SSF51621">
    <property type="entry name" value="Phosphoenolpyruvate/pyruvate domain"/>
    <property type="match status" value="1"/>
</dbReference>
<feature type="chain" id="PRO_0000184836" description="3-methyl-2-oxobutanoate hydroxymethyltransferase">
    <location>
        <begin position="1"/>
        <end position="276"/>
    </location>
</feature>
<feature type="active site" description="Proton acceptor" evidence="1">
    <location>
        <position position="182"/>
    </location>
</feature>
<feature type="binding site" evidence="1">
    <location>
        <begin position="44"/>
        <end position="45"/>
    </location>
    <ligand>
        <name>3-methyl-2-oxobutanoate</name>
        <dbReference type="ChEBI" id="CHEBI:11851"/>
    </ligand>
</feature>
<feature type="binding site" evidence="1">
    <location>
        <position position="44"/>
    </location>
    <ligand>
        <name>Mg(2+)</name>
        <dbReference type="ChEBI" id="CHEBI:18420"/>
    </ligand>
</feature>
<feature type="binding site" evidence="1">
    <location>
        <position position="83"/>
    </location>
    <ligand>
        <name>3-methyl-2-oxobutanoate</name>
        <dbReference type="ChEBI" id="CHEBI:11851"/>
    </ligand>
</feature>
<feature type="binding site" evidence="1">
    <location>
        <position position="83"/>
    </location>
    <ligand>
        <name>Mg(2+)</name>
        <dbReference type="ChEBI" id="CHEBI:18420"/>
    </ligand>
</feature>
<feature type="binding site" evidence="1">
    <location>
        <position position="113"/>
    </location>
    <ligand>
        <name>3-methyl-2-oxobutanoate</name>
        <dbReference type="ChEBI" id="CHEBI:11851"/>
    </ligand>
</feature>
<feature type="binding site" evidence="1">
    <location>
        <position position="115"/>
    </location>
    <ligand>
        <name>Mg(2+)</name>
        <dbReference type="ChEBI" id="CHEBI:18420"/>
    </ligand>
</feature>
<organism>
    <name type="scientific">Clostridium acetobutylicum (strain ATCC 824 / DSM 792 / JCM 1419 / IAM 19013 / LMG 5710 / NBRC 13948 / NRRL B-527 / VKM B-1787 / 2291 / W)</name>
    <dbReference type="NCBI Taxonomy" id="272562"/>
    <lineage>
        <taxon>Bacteria</taxon>
        <taxon>Bacillati</taxon>
        <taxon>Bacillota</taxon>
        <taxon>Clostridia</taxon>
        <taxon>Eubacteriales</taxon>
        <taxon>Clostridiaceae</taxon>
        <taxon>Clostridium</taxon>
    </lineage>
</organism>